<sequence length="58" mass="6863">MFTVFLLVVLVTTVVFSTSDHRPASNHENRRASKRISEMTWEECCTNPVCRQHYMHYC</sequence>
<feature type="signal peptide" evidence="3">
    <location>
        <begin position="1"/>
        <end position="17"/>
    </location>
</feature>
<feature type="propeptide" id="PRO_0000366068" evidence="3">
    <location>
        <begin position="18"/>
        <end position="35"/>
    </location>
</feature>
<feature type="peptide" id="PRO_0000366069" description="Alpha-conotoxin-like Pu1.6">
    <location>
        <begin position="36"/>
        <end position="58"/>
    </location>
</feature>
<feature type="region of interest" description="Lacks the Ser-Xaa-Pro motif that is crucial for potent interaction with nAChR" evidence="4">
    <location>
        <begin position="46"/>
        <end position="48"/>
    </location>
</feature>
<feature type="disulfide bond" evidence="1">
    <location>
        <begin position="44"/>
        <end position="50"/>
    </location>
</feature>
<feature type="disulfide bond" evidence="1">
    <location>
        <begin position="45"/>
        <end position="58"/>
    </location>
</feature>
<reference key="1">
    <citation type="journal article" date="2008" name="Toxicon">
        <title>Alpha-conopeptides specifically expressed in the salivary gland of Conus pulicarius.</title>
        <authorList>
            <person name="Biggs J.S."/>
            <person name="Olivera B.M."/>
            <person name="Kantor Y.I."/>
        </authorList>
    </citation>
    <scope>NUCLEOTIDE SEQUENCE [MRNA]</scope>
    <source>
        <tissue>Venom duct</tissue>
    </source>
</reference>
<keyword id="KW-0008">Acetylcholine receptor inhibiting toxin</keyword>
<keyword id="KW-1015">Disulfide bond</keyword>
<keyword id="KW-0872">Ion channel impairing toxin</keyword>
<keyword id="KW-0528">Neurotoxin</keyword>
<keyword id="KW-0629">Postsynaptic neurotoxin</keyword>
<keyword id="KW-0964">Secreted</keyword>
<keyword id="KW-0732">Signal</keyword>
<keyword id="KW-0800">Toxin</keyword>
<evidence type="ECO:0000250" key="1">
    <source>
        <dbReference type="UniProtKB" id="P56636"/>
    </source>
</evidence>
<evidence type="ECO:0000250" key="2">
    <source>
        <dbReference type="UniProtKB" id="Q2I2R8"/>
    </source>
</evidence>
<evidence type="ECO:0000255" key="3"/>
<evidence type="ECO:0000305" key="4"/>
<evidence type="ECO:0000305" key="5">
    <source>
    </source>
</evidence>
<comment type="function">
    <text evidence="2">Alpha-conotoxins act on postsynaptic membranes, they bind to the nicotinic acetylcholine receptors (nAChR) and thus inhibit them (By similarity). Has possibly a distinct nAChR binding mode from other alpha-conotoxins, due to a different three residue motif (lacks the Ser-Xaa-Pro motif) (By similarity).</text>
</comment>
<comment type="subcellular location">
    <subcellularLocation>
        <location evidence="5">Secreted</location>
    </subcellularLocation>
</comment>
<comment type="tissue specificity">
    <text evidence="5">Expressed by the venom duct.</text>
</comment>
<comment type="domain">
    <text evidence="4">The cysteine framework is I (CC-C-C). Alpha4/7 pattern.</text>
</comment>
<comment type="similarity">
    <text evidence="4">Belongs to the conotoxin A superfamily.</text>
</comment>
<accession>P0C8V0</accession>
<organism>
    <name type="scientific">Conus pulicarius</name>
    <name type="common">Flea-bitten cone</name>
    <dbReference type="NCBI Taxonomy" id="93154"/>
    <lineage>
        <taxon>Eukaryota</taxon>
        <taxon>Metazoa</taxon>
        <taxon>Spiralia</taxon>
        <taxon>Lophotrochozoa</taxon>
        <taxon>Mollusca</taxon>
        <taxon>Gastropoda</taxon>
        <taxon>Caenogastropoda</taxon>
        <taxon>Neogastropoda</taxon>
        <taxon>Conoidea</taxon>
        <taxon>Conidae</taxon>
        <taxon>Conus</taxon>
    </lineage>
</organism>
<dbReference type="ConoServer" id="2867">
    <property type="toxin name" value="Pu1.6 precursor"/>
</dbReference>
<dbReference type="GO" id="GO:0005576">
    <property type="term" value="C:extracellular region"/>
    <property type="evidence" value="ECO:0007669"/>
    <property type="project" value="UniProtKB-SubCell"/>
</dbReference>
<dbReference type="GO" id="GO:0035792">
    <property type="term" value="C:host cell postsynaptic membrane"/>
    <property type="evidence" value="ECO:0007669"/>
    <property type="project" value="UniProtKB-KW"/>
</dbReference>
<dbReference type="GO" id="GO:0030550">
    <property type="term" value="F:acetylcholine receptor inhibitor activity"/>
    <property type="evidence" value="ECO:0007669"/>
    <property type="project" value="UniProtKB-KW"/>
</dbReference>
<dbReference type="GO" id="GO:0099106">
    <property type="term" value="F:ion channel regulator activity"/>
    <property type="evidence" value="ECO:0007669"/>
    <property type="project" value="UniProtKB-KW"/>
</dbReference>
<dbReference type="GO" id="GO:0090729">
    <property type="term" value="F:toxin activity"/>
    <property type="evidence" value="ECO:0007669"/>
    <property type="project" value="UniProtKB-KW"/>
</dbReference>
<dbReference type="InterPro" id="IPR009958">
    <property type="entry name" value="Conotoxin_a-typ"/>
</dbReference>
<dbReference type="Pfam" id="PF07365">
    <property type="entry name" value="Toxin_8"/>
    <property type="match status" value="1"/>
</dbReference>
<proteinExistence type="inferred from homology"/>
<protein>
    <recommendedName>
        <fullName>Alpha-conotoxin-like Pu1.6</fullName>
    </recommendedName>
</protein>
<name>CA16_CONPL</name>